<comment type="function">
    <text evidence="2 8 9 10 11">Transcriptional regulator with bimodal DNA-binding specificity. Binds to methylated CpG dinucleotides in the consensus sequence 5'-CGCG-3' and also binds to the non-methylated consensus sequence 5'-CTGCNA-3' also known as the consensus kaiso binding site (KBS). May recruit the N-CoR repressor complex to promote histone deacetylation and the formation of repressive chromatin structures in target gene promoters. Contributes to the repression of target genes of the Wnt signaling pathway. May also activate transcription of a subset of target genes by the recruitment of CTNND2. Represses expression of MMP7 in conjunction with transcriptional corepressors CBFA2T3, CBFA2T2 and RUNX1T1 (By similarity).</text>
</comment>
<comment type="subunit">
    <text evidence="2 6 7 9 10">Interacts with NCOR1 (By similarity). Self-associates. Interacts with CTNND1, and this interaction inhibits binding to both methylated and non-methylated DNA. Interacts with CTNND2. Interacts with KPNA2/RCH1, which may mediate nuclear import of this protein. Interacts with CBFA2T3 (By similarity).</text>
</comment>
<comment type="interaction">
    <interactant intactId="EBI-1216314">
        <id>Q8BN78</id>
    </interactant>
    <interactant intactId="EBI-529924">
        <id>P30999</id>
        <label>Ctnnd1</label>
    </interactant>
    <organismsDiffer>false</organismsDiffer>
    <experiments>3</experiments>
</comment>
<comment type="subcellular location">
    <subcellularLocation>
        <location evidence="6 9 10">Nucleus</location>
    </subcellularLocation>
</comment>
<comment type="tissue specificity">
    <text evidence="6 9">Expressed in brain, heart, kidney, liver, lung, neuromuscular junctions, skeletal muscle, spleen and testis.</text>
</comment>
<accession>Q8BN78</accession>
<accession>Q8C226</accession>
<accession>Q9WTZ7</accession>
<reference key="1">
    <citation type="journal article" date="1999" name="Mol. Cell. Biol.">
        <title>The catenin p120(ctn) interacts with Kaiso, a novel BTB/POZ domain zinc finger transcription factor.</title>
        <authorList>
            <person name="Daniel J.M."/>
            <person name="Reynolds A.B."/>
        </authorList>
    </citation>
    <scope>NUCLEOTIDE SEQUENCE [MRNA]</scope>
    <scope>SELF-ASSOCIATION</scope>
    <scope>INTERACTION WITH CTNND1</scope>
    <scope>SUBCELLULAR LOCATION</scope>
    <scope>TISSUE SPECIFICITY</scope>
</reference>
<reference key="2">
    <citation type="journal article" date="2005" name="Science">
        <title>The transcriptional landscape of the mammalian genome.</title>
        <authorList>
            <person name="Carninci P."/>
            <person name="Kasukawa T."/>
            <person name="Katayama S."/>
            <person name="Gough J."/>
            <person name="Frith M.C."/>
            <person name="Maeda N."/>
            <person name="Oyama R."/>
            <person name="Ravasi T."/>
            <person name="Lenhard B."/>
            <person name="Wells C."/>
            <person name="Kodzius R."/>
            <person name="Shimokawa K."/>
            <person name="Bajic V.B."/>
            <person name="Brenner S.E."/>
            <person name="Batalov S."/>
            <person name="Forrest A.R."/>
            <person name="Zavolan M."/>
            <person name="Davis M.J."/>
            <person name="Wilming L.G."/>
            <person name="Aidinis V."/>
            <person name="Allen J.E."/>
            <person name="Ambesi-Impiombato A."/>
            <person name="Apweiler R."/>
            <person name="Aturaliya R.N."/>
            <person name="Bailey T.L."/>
            <person name="Bansal M."/>
            <person name="Baxter L."/>
            <person name="Beisel K.W."/>
            <person name="Bersano T."/>
            <person name="Bono H."/>
            <person name="Chalk A.M."/>
            <person name="Chiu K.P."/>
            <person name="Choudhary V."/>
            <person name="Christoffels A."/>
            <person name="Clutterbuck D.R."/>
            <person name="Crowe M.L."/>
            <person name="Dalla E."/>
            <person name="Dalrymple B.P."/>
            <person name="de Bono B."/>
            <person name="Della Gatta G."/>
            <person name="di Bernardo D."/>
            <person name="Down T."/>
            <person name="Engstrom P."/>
            <person name="Fagiolini M."/>
            <person name="Faulkner G."/>
            <person name="Fletcher C.F."/>
            <person name="Fukushima T."/>
            <person name="Furuno M."/>
            <person name="Futaki S."/>
            <person name="Gariboldi M."/>
            <person name="Georgii-Hemming P."/>
            <person name="Gingeras T.R."/>
            <person name="Gojobori T."/>
            <person name="Green R.E."/>
            <person name="Gustincich S."/>
            <person name="Harbers M."/>
            <person name="Hayashi Y."/>
            <person name="Hensch T.K."/>
            <person name="Hirokawa N."/>
            <person name="Hill D."/>
            <person name="Huminiecki L."/>
            <person name="Iacono M."/>
            <person name="Ikeo K."/>
            <person name="Iwama A."/>
            <person name="Ishikawa T."/>
            <person name="Jakt M."/>
            <person name="Kanapin A."/>
            <person name="Katoh M."/>
            <person name="Kawasawa Y."/>
            <person name="Kelso J."/>
            <person name="Kitamura H."/>
            <person name="Kitano H."/>
            <person name="Kollias G."/>
            <person name="Krishnan S.P."/>
            <person name="Kruger A."/>
            <person name="Kummerfeld S.K."/>
            <person name="Kurochkin I.V."/>
            <person name="Lareau L.F."/>
            <person name="Lazarevic D."/>
            <person name="Lipovich L."/>
            <person name="Liu J."/>
            <person name="Liuni S."/>
            <person name="McWilliam S."/>
            <person name="Madan Babu M."/>
            <person name="Madera M."/>
            <person name="Marchionni L."/>
            <person name="Matsuda H."/>
            <person name="Matsuzawa S."/>
            <person name="Miki H."/>
            <person name="Mignone F."/>
            <person name="Miyake S."/>
            <person name="Morris K."/>
            <person name="Mottagui-Tabar S."/>
            <person name="Mulder N."/>
            <person name="Nakano N."/>
            <person name="Nakauchi H."/>
            <person name="Ng P."/>
            <person name="Nilsson R."/>
            <person name="Nishiguchi S."/>
            <person name="Nishikawa S."/>
            <person name="Nori F."/>
            <person name="Ohara O."/>
            <person name="Okazaki Y."/>
            <person name="Orlando V."/>
            <person name="Pang K.C."/>
            <person name="Pavan W.J."/>
            <person name="Pavesi G."/>
            <person name="Pesole G."/>
            <person name="Petrovsky N."/>
            <person name="Piazza S."/>
            <person name="Reed J."/>
            <person name="Reid J.F."/>
            <person name="Ring B.Z."/>
            <person name="Ringwald M."/>
            <person name="Rost B."/>
            <person name="Ruan Y."/>
            <person name="Salzberg S.L."/>
            <person name="Sandelin A."/>
            <person name="Schneider C."/>
            <person name="Schoenbach C."/>
            <person name="Sekiguchi K."/>
            <person name="Semple C.A."/>
            <person name="Seno S."/>
            <person name="Sessa L."/>
            <person name="Sheng Y."/>
            <person name="Shibata Y."/>
            <person name="Shimada H."/>
            <person name="Shimada K."/>
            <person name="Silva D."/>
            <person name="Sinclair B."/>
            <person name="Sperling S."/>
            <person name="Stupka E."/>
            <person name="Sugiura K."/>
            <person name="Sultana R."/>
            <person name="Takenaka Y."/>
            <person name="Taki K."/>
            <person name="Tammoja K."/>
            <person name="Tan S.L."/>
            <person name="Tang S."/>
            <person name="Taylor M.S."/>
            <person name="Tegner J."/>
            <person name="Teichmann S.A."/>
            <person name="Ueda H.R."/>
            <person name="van Nimwegen E."/>
            <person name="Verardo R."/>
            <person name="Wei C.L."/>
            <person name="Yagi K."/>
            <person name="Yamanishi H."/>
            <person name="Zabarovsky E."/>
            <person name="Zhu S."/>
            <person name="Zimmer A."/>
            <person name="Hide W."/>
            <person name="Bult C."/>
            <person name="Grimmond S.M."/>
            <person name="Teasdale R.D."/>
            <person name="Liu E.T."/>
            <person name="Brusic V."/>
            <person name="Quackenbush J."/>
            <person name="Wahlestedt C."/>
            <person name="Mattick J.S."/>
            <person name="Hume D.A."/>
            <person name="Kai C."/>
            <person name="Sasaki D."/>
            <person name="Tomaru Y."/>
            <person name="Fukuda S."/>
            <person name="Kanamori-Katayama M."/>
            <person name="Suzuki M."/>
            <person name="Aoki J."/>
            <person name="Arakawa T."/>
            <person name="Iida J."/>
            <person name="Imamura K."/>
            <person name="Itoh M."/>
            <person name="Kato T."/>
            <person name="Kawaji H."/>
            <person name="Kawagashira N."/>
            <person name="Kawashima T."/>
            <person name="Kojima M."/>
            <person name="Kondo S."/>
            <person name="Konno H."/>
            <person name="Nakano K."/>
            <person name="Ninomiya N."/>
            <person name="Nishio T."/>
            <person name="Okada M."/>
            <person name="Plessy C."/>
            <person name="Shibata K."/>
            <person name="Shiraki T."/>
            <person name="Suzuki S."/>
            <person name="Tagami M."/>
            <person name="Waki K."/>
            <person name="Watahiki A."/>
            <person name="Okamura-Oho Y."/>
            <person name="Suzuki H."/>
            <person name="Kawai J."/>
            <person name="Hayashizaki Y."/>
        </authorList>
    </citation>
    <scope>NUCLEOTIDE SEQUENCE [LARGE SCALE MRNA]</scope>
    <source>
        <strain>C57BL/6J</strain>
        <tissue>Eye</tissue>
    </source>
</reference>
<reference key="3">
    <citation type="journal article" date="2002" name="Nucleic Acids Res.">
        <title>The p120(ctn)-binding partner Kaiso is a bi-modal DNA-binding protein that recognizes both a sequence-specific consensus and methylated CpG dinucleotides.</title>
        <authorList>
            <person name="Daniel J.M."/>
            <person name="Spring C.M."/>
            <person name="Crawford H.C."/>
            <person name="Reynolds A.B."/>
            <person name="Baig A."/>
        </authorList>
    </citation>
    <scope>DNA-BINDING</scope>
    <scope>INTERACTION WITH CTNND1</scope>
</reference>
<reference key="4">
    <citation type="journal article" date="2004" name="J. Cell Sci.">
        <title>NLS-dependent nuclear localization of p120ctn is necessary to relieve Kaiso-mediated transcriptional repression.</title>
        <authorList>
            <person name="Kelly K.F."/>
            <person name="Spring C.M."/>
            <person name="Otchere A.A."/>
            <person name="Daniel J.M."/>
        </authorList>
    </citation>
    <scope>FUNCTION</scope>
</reference>
<reference key="5">
    <citation type="journal article" date="2004" name="J. Cell Sci.">
        <authorList>
            <person name="Kelly K.F."/>
            <person name="Spring C.M."/>
            <person name="Otchere A.A."/>
            <person name="Daniel J.M."/>
        </authorList>
    </citation>
    <scope>ERRATUM OF PUBMED:15138284</scope>
</reference>
<reference key="6">
    <citation type="journal article" date="2004" name="J. Cell Sci.">
        <title>Nuclear import of the BTB/POZ transcriptional regulator Kaiso.</title>
        <authorList>
            <person name="Kelly K.F."/>
            <person name="Otchere A.A."/>
            <person name="Graham M."/>
            <person name="Daniel J.M."/>
        </authorList>
    </citation>
    <scope>FUNCTION</scope>
    <scope>INTERACTION WITH KPNA2</scope>
    <scope>SUBCELLULAR LOCATION</scope>
    <scope>NUCLEAR LOCALIZATION SIGNAL</scope>
    <scope>MUTAGENESIS OF LYS-472</scope>
</reference>
<reference key="7">
    <citation type="journal article" date="2004" name="Mol. Cell. Biol.">
        <title>Regulation of the rapsyn promoter by kaiso and delta-catenin.</title>
        <authorList>
            <person name="Rodova M."/>
            <person name="Kelly K.F."/>
            <person name="VanSaun M."/>
            <person name="Daniel J.M."/>
            <person name="Werle M.J."/>
        </authorList>
    </citation>
    <scope>FUNCTION</scope>
    <scope>DNA-BINDING</scope>
    <scope>INTERACTION WITH CTNND2</scope>
    <scope>SUBCELLULAR LOCATION</scope>
    <scope>TISSUE SPECIFICITY</scope>
</reference>
<reference key="8">
    <citation type="journal article" date="2005" name="Exp. Cell Res.">
        <title>The catenin p120ctn inhibits Kaiso-mediated transcriptional repression of the beta-catenin/TCF target gene matrilysin.</title>
        <authorList>
            <person name="Spring C.M."/>
            <person name="Kelly K.F."/>
            <person name="O'Kelly I."/>
            <person name="Graham M."/>
            <person name="Crawford H.C."/>
            <person name="Daniel J.M."/>
        </authorList>
    </citation>
    <scope>FUNCTION</scope>
</reference>
<reference key="9">
    <citation type="journal article" date="2005" name="J. Neurochem.">
        <title>The tissue-specific methylation of the human tyrosine hydroxylase gene reveals new regulatory elements in the first exon.</title>
        <authorList>
            <person name="Aranyi T."/>
            <person name="Faucheux B.A."/>
            <person name="Khalfallah O."/>
            <person name="Vodjdani G."/>
            <person name="Biguet N.F."/>
            <person name="Mallet J."/>
            <person name="Meloni R."/>
        </authorList>
    </citation>
    <scope>DNA-BINDING</scope>
</reference>
<dbReference type="EMBL" id="AF097416">
    <property type="protein sequence ID" value="AAD20989.1"/>
    <property type="molecule type" value="mRNA"/>
</dbReference>
<dbReference type="EMBL" id="AK087417">
    <property type="protein sequence ID" value="BAC39866.1"/>
    <property type="molecule type" value="mRNA"/>
</dbReference>
<dbReference type="EMBL" id="AK089423">
    <property type="protein sequence ID" value="BAC40875.1"/>
    <property type="molecule type" value="mRNA"/>
</dbReference>
<dbReference type="CCDS" id="CCDS30088.1"/>
<dbReference type="RefSeq" id="NP_001072981.1">
    <property type="nucleotide sequence ID" value="NM_001079513.1"/>
</dbReference>
<dbReference type="RefSeq" id="NP_064652.2">
    <property type="nucleotide sequence ID" value="NM_020256.2"/>
</dbReference>
<dbReference type="SMR" id="Q8BN78"/>
<dbReference type="BioGRID" id="208181">
    <property type="interactions" value="10"/>
</dbReference>
<dbReference type="FunCoup" id="Q8BN78">
    <property type="interactions" value="4504"/>
</dbReference>
<dbReference type="IntAct" id="Q8BN78">
    <property type="interactions" value="3"/>
</dbReference>
<dbReference type="MINT" id="Q8BN78"/>
<dbReference type="STRING" id="10090.ENSMUSP00000049983"/>
<dbReference type="iPTMnet" id="Q8BN78"/>
<dbReference type="PhosphoSitePlus" id="Q8BN78"/>
<dbReference type="PaxDb" id="10090-ENSMUSP00000110795"/>
<dbReference type="ProteomicsDB" id="263572"/>
<dbReference type="Pumba" id="Q8BN78"/>
<dbReference type="Antibodypedia" id="401">
    <property type="antibodies" value="211 antibodies from 31 providers"/>
</dbReference>
<dbReference type="DNASU" id="56805"/>
<dbReference type="Ensembl" id="ENSMUST00000049740.3">
    <property type="protein sequence ID" value="ENSMUSP00000049983.3"/>
    <property type="gene ID" value="ENSMUSG00000048047.4"/>
</dbReference>
<dbReference type="Ensembl" id="ENSMUST00000115142.3">
    <property type="protein sequence ID" value="ENSMUSP00000110795.3"/>
    <property type="gene ID" value="ENSMUSG00000048047.4"/>
</dbReference>
<dbReference type="GeneID" id="56805"/>
<dbReference type="KEGG" id="mmu:56805"/>
<dbReference type="UCSC" id="uc009szp.1">
    <property type="organism name" value="mouse"/>
</dbReference>
<dbReference type="AGR" id="MGI:1927290"/>
<dbReference type="CTD" id="10009"/>
<dbReference type="MGI" id="MGI:1927290">
    <property type="gene designation" value="Zbtb33"/>
</dbReference>
<dbReference type="VEuPathDB" id="HostDB:ENSMUSG00000048047"/>
<dbReference type="eggNOG" id="KOG1721">
    <property type="taxonomic scope" value="Eukaryota"/>
</dbReference>
<dbReference type="GeneTree" id="ENSGT00940000157481"/>
<dbReference type="InParanoid" id="Q8BN78"/>
<dbReference type="OMA" id="VTQVQPN"/>
<dbReference type="OrthoDB" id="6359816at2759"/>
<dbReference type="PhylomeDB" id="Q8BN78"/>
<dbReference type="TreeFam" id="TF333100"/>
<dbReference type="BioGRID-ORCS" id="56805">
    <property type="hits" value="0 hits in 80 CRISPR screens"/>
</dbReference>
<dbReference type="ChiTaRS" id="Zbtb33">
    <property type="organism name" value="mouse"/>
</dbReference>
<dbReference type="PRO" id="PR:Q8BN78"/>
<dbReference type="Proteomes" id="UP000000589">
    <property type="component" value="Chromosome X"/>
</dbReference>
<dbReference type="RNAct" id="Q8BN78">
    <property type="molecule type" value="protein"/>
</dbReference>
<dbReference type="Bgee" id="ENSMUSG00000048047">
    <property type="expression patterns" value="Expressed in medial ganglionic eminence and 221 other cell types or tissues"/>
</dbReference>
<dbReference type="ExpressionAtlas" id="Q8BN78">
    <property type="expression patterns" value="baseline and differential"/>
</dbReference>
<dbReference type="GO" id="GO:0005829">
    <property type="term" value="C:cytosol"/>
    <property type="evidence" value="ECO:0007669"/>
    <property type="project" value="Ensembl"/>
</dbReference>
<dbReference type="GO" id="GO:0005730">
    <property type="term" value="C:nucleolus"/>
    <property type="evidence" value="ECO:0007669"/>
    <property type="project" value="Ensembl"/>
</dbReference>
<dbReference type="GO" id="GO:0005654">
    <property type="term" value="C:nucleoplasm"/>
    <property type="evidence" value="ECO:0007669"/>
    <property type="project" value="Ensembl"/>
</dbReference>
<dbReference type="GO" id="GO:0005634">
    <property type="term" value="C:nucleus"/>
    <property type="evidence" value="ECO:0000314"/>
    <property type="project" value="MGI"/>
</dbReference>
<dbReference type="GO" id="GO:0005886">
    <property type="term" value="C:plasma membrane"/>
    <property type="evidence" value="ECO:0007669"/>
    <property type="project" value="Ensembl"/>
</dbReference>
<dbReference type="GO" id="GO:0008327">
    <property type="term" value="F:methyl-CpG binding"/>
    <property type="evidence" value="ECO:0007669"/>
    <property type="project" value="Ensembl"/>
</dbReference>
<dbReference type="GO" id="GO:1990837">
    <property type="term" value="F:sequence-specific double-stranded DNA binding"/>
    <property type="evidence" value="ECO:0007669"/>
    <property type="project" value="Ensembl"/>
</dbReference>
<dbReference type="GO" id="GO:0008270">
    <property type="term" value="F:zinc ion binding"/>
    <property type="evidence" value="ECO:0007669"/>
    <property type="project" value="UniProtKB-KW"/>
</dbReference>
<dbReference type="GO" id="GO:0006351">
    <property type="term" value="P:DNA-templated transcription"/>
    <property type="evidence" value="ECO:0000247"/>
    <property type="project" value="MGI"/>
</dbReference>
<dbReference type="GO" id="GO:0045892">
    <property type="term" value="P:negative regulation of DNA-templated transcription"/>
    <property type="evidence" value="ECO:0000250"/>
    <property type="project" value="UniProtKB"/>
</dbReference>
<dbReference type="GO" id="GO:0016055">
    <property type="term" value="P:Wnt signaling pathway"/>
    <property type="evidence" value="ECO:0007669"/>
    <property type="project" value="UniProtKB-KW"/>
</dbReference>
<dbReference type="CDD" id="cd18219">
    <property type="entry name" value="BTB_POZ_ZBTB33_KAISO"/>
    <property type="match status" value="1"/>
</dbReference>
<dbReference type="FunFam" id="3.30.160.60:FF:000749">
    <property type="entry name" value="Transcriptional regulator Kaiso"/>
    <property type="match status" value="1"/>
</dbReference>
<dbReference type="FunFam" id="3.30.160.60:FF:001008">
    <property type="entry name" value="transcriptional regulator Kaiso isoform X1"/>
    <property type="match status" value="1"/>
</dbReference>
<dbReference type="FunFam" id="3.30.710.10:FF:000077">
    <property type="entry name" value="transcriptional regulator Kaiso isoform X1"/>
    <property type="match status" value="1"/>
</dbReference>
<dbReference type="FunFam" id="3.30.160.60:FF:000235">
    <property type="entry name" value="Zinc finger and BTB domain containing 38"/>
    <property type="match status" value="1"/>
</dbReference>
<dbReference type="Gene3D" id="3.30.160.60">
    <property type="entry name" value="Classic Zinc Finger"/>
    <property type="match status" value="3"/>
</dbReference>
<dbReference type="Gene3D" id="3.30.710.10">
    <property type="entry name" value="Potassium Channel Kv1.1, Chain A"/>
    <property type="match status" value="1"/>
</dbReference>
<dbReference type="InterPro" id="IPR000210">
    <property type="entry name" value="BTB/POZ_dom"/>
</dbReference>
<dbReference type="InterPro" id="IPR011333">
    <property type="entry name" value="SKP1/BTB/POZ_sf"/>
</dbReference>
<dbReference type="InterPro" id="IPR036236">
    <property type="entry name" value="Znf_C2H2_sf"/>
</dbReference>
<dbReference type="InterPro" id="IPR013087">
    <property type="entry name" value="Znf_C2H2_type"/>
</dbReference>
<dbReference type="InterPro" id="IPR050457">
    <property type="entry name" value="ZnFinger_BTB_dom_contain"/>
</dbReference>
<dbReference type="PANTHER" id="PTHR46105">
    <property type="entry name" value="AGAP004733-PA"/>
    <property type="match status" value="1"/>
</dbReference>
<dbReference type="PANTHER" id="PTHR46105:SF27">
    <property type="entry name" value="TRANSCRIPTIONAL REGULATOR KAISO"/>
    <property type="match status" value="1"/>
</dbReference>
<dbReference type="Pfam" id="PF00651">
    <property type="entry name" value="BTB"/>
    <property type="match status" value="1"/>
</dbReference>
<dbReference type="SMART" id="SM00225">
    <property type="entry name" value="BTB"/>
    <property type="match status" value="1"/>
</dbReference>
<dbReference type="SMART" id="SM00355">
    <property type="entry name" value="ZnF_C2H2"/>
    <property type="match status" value="3"/>
</dbReference>
<dbReference type="SUPFAM" id="SSF57667">
    <property type="entry name" value="beta-beta-alpha zinc fingers"/>
    <property type="match status" value="2"/>
</dbReference>
<dbReference type="SUPFAM" id="SSF54695">
    <property type="entry name" value="POZ domain"/>
    <property type="match status" value="1"/>
</dbReference>
<dbReference type="PROSITE" id="PS50097">
    <property type="entry name" value="BTB"/>
    <property type="match status" value="1"/>
</dbReference>
<dbReference type="PROSITE" id="PS00028">
    <property type="entry name" value="ZINC_FINGER_C2H2_1"/>
    <property type="match status" value="3"/>
</dbReference>
<dbReference type="PROSITE" id="PS50157">
    <property type="entry name" value="ZINC_FINGER_C2H2_2"/>
    <property type="match status" value="3"/>
</dbReference>
<sequence length="671" mass="74050">MESRKLISATDIQYSASLLNSLNEQRGHGLFCDVTVIVEDRKFRAHRNILSASSTYFHQLFSVAGQVVELSFIRAEIFAEILNYIYSSKVVRVRADLLDELIKSGQLLGVKFIAELGVPLSQVKSISGTEQDGTAETLPSSSSDKSLDMEKSKDEAQDNGATVMPIITESFSLSAEDNEMKKIIVTDSDDDDDDDVIFCSEILPAKEDLPSNNTATQVQPNPASVAISEVTPCASNNSPPVTNITPTQLPTPVNQATLSQTQGSEELLVSSASTHLTPNIILLNQAPLTAPPSASSSLPNHMSSSVNVLVQNQQTPNSAVLTGNKAEEEEEIIDDDDDIISSSPDSAVSNTSLVPQADNSKSTTLDGSLTQKMQIPVLPQEPPSNSLKISDVITRNTNDPGLRSKHVMEGQKIITLDTATEIEGLSTGCKVYANIGEDTYDIVIPVKDDPDGGEAKLDNELPKTSGSEPPNKRMKVKHDDHYELIVDGRVYYICIVCKRSYVCLTSLRRHFNIHSWEKKYQCRYCDKVFPLAEYRTKHEIHHTGERRYQCLTCGKSFINYQFMSSHIKSVHSQDPSGDSKLYRLHPCKSLQIRQYAYLSNKSSAMPVMKDDAVGYKVDAGKEPPVGTTSTPPQNKSTFWEDIFIQQENDSIFKQNVTDGSTEFEFIIPESY</sequence>
<organism>
    <name type="scientific">Mus musculus</name>
    <name type="common">Mouse</name>
    <dbReference type="NCBI Taxonomy" id="10090"/>
    <lineage>
        <taxon>Eukaryota</taxon>
        <taxon>Metazoa</taxon>
        <taxon>Chordata</taxon>
        <taxon>Craniata</taxon>
        <taxon>Vertebrata</taxon>
        <taxon>Euteleostomi</taxon>
        <taxon>Mammalia</taxon>
        <taxon>Eutheria</taxon>
        <taxon>Euarchontoglires</taxon>
        <taxon>Glires</taxon>
        <taxon>Rodentia</taxon>
        <taxon>Myomorpha</taxon>
        <taxon>Muroidea</taxon>
        <taxon>Muridae</taxon>
        <taxon>Murinae</taxon>
        <taxon>Mus</taxon>
        <taxon>Mus</taxon>
    </lineage>
</organism>
<protein>
    <recommendedName>
        <fullName>Transcriptional regulator Kaiso</fullName>
    </recommendedName>
    <alternativeName>
        <fullName>Zinc finger and BTB domain-containing protein 33</fullName>
    </alternativeName>
</protein>
<keyword id="KW-0010">Activator</keyword>
<keyword id="KW-0238">DNA-binding</keyword>
<keyword id="KW-1017">Isopeptide bond</keyword>
<keyword id="KW-0479">Metal-binding</keyword>
<keyword id="KW-0539">Nucleus</keyword>
<keyword id="KW-0597">Phosphoprotein</keyword>
<keyword id="KW-1185">Reference proteome</keyword>
<keyword id="KW-0677">Repeat</keyword>
<keyword id="KW-0678">Repressor</keyword>
<keyword id="KW-0804">Transcription</keyword>
<keyword id="KW-0805">Transcription regulation</keyword>
<keyword id="KW-0832">Ubl conjugation</keyword>
<keyword id="KW-0879">Wnt signaling pathway</keyword>
<keyword id="KW-0862">Zinc</keyword>
<keyword id="KW-0863">Zinc-finger</keyword>
<gene>
    <name type="primary">Zbtb33</name>
    <name type="synonym">Kaiso</name>
</gene>
<evidence type="ECO:0000250" key="1"/>
<evidence type="ECO:0000250" key="2">
    <source>
        <dbReference type="UniProtKB" id="Q86T24"/>
    </source>
</evidence>
<evidence type="ECO:0000255" key="3">
    <source>
        <dbReference type="PROSITE-ProRule" id="PRU00037"/>
    </source>
</evidence>
<evidence type="ECO:0000255" key="4">
    <source>
        <dbReference type="PROSITE-ProRule" id="PRU00042"/>
    </source>
</evidence>
<evidence type="ECO:0000256" key="5">
    <source>
        <dbReference type="SAM" id="MobiDB-lite"/>
    </source>
</evidence>
<evidence type="ECO:0000269" key="6">
    <source>
    </source>
</evidence>
<evidence type="ECO:0000269" key="7">
    <source>
    </source>
</evidence>
<evidence type="ECO:0000269" key="8">
    <source>
    </source>
</evidence>
<evidence type="ECO:0000269" key="9">
    <source>
    </source>
</evidence>
<evidence type="ECO:0000269" key="10">
    <source>
    </source>
</evidence>
<evidence type="ECO:0000269" key="11">
    <source>
    </source>
</evidence>
<evidence type="ECO:0000305" key="12"/>
<name>KAISO_MOUSE</name>
<feature type="chain" id="PRO_0000046989" description="Transcriptional regulator Kaiso">
    <location>
        <begin position="1"/>
        <end position="671"/>
    </location>
</feature>
<feature type="domain" description="BTB" evidence="3">
    <location>
        <begin position="32"/>
        <end position="94"/>
    </location>
</feature>
<feature type="zinc finger region" description="C2H2-type 1" evidence="4">
    <location>
        <begin position="492"/>
        <end position="514"/>
    </location>
</feature>
<feature type="zinc finger region" description="C2H2-type 2" evidence="4">
    <location>
        <begin position="520"/>
        <end position="542"/>
    </location>
</feature>
<feature type="zinc finger region" description="C2H2-type 3" evidence="4">
    <location>
        <begin position="548"/>
        <end position="571"/>
    </location>
</feature>
<feature type="region of interest" description="Self-association">
    <location>
        <begin position="1"/>
        <end position="136"/>
    </location>
</feature>
<feature type="region of interest" description="Interaction with NCOR1" evidence="1">
    <location>
        <begin position="1"/>
        <end position="103"/>
    </location>
</feature>
<feature type="region of interest" description="Disordered" evidence="5">
    <location>
        <begin position="127"/>
        <end position="161"/>
    </location>
</feature>
<feature type="region of interest" description="Interaction with CBFA2T3" evidence="2">
    <location>
        <begin position="298"/>
        <end position="571"/>
    </location>
</feature>
<feature type="region of interest" description="Disordered" evidence="5">
    <location>
        <begin position="332"/>
        <end position="365"/>
    </location>
</feature>
<feature type="region of interest" description="Disordered" evidence="5">
    <location>
        <begin position="451"/>
        <end position="474"/>
    </location>
</feature>
<feature type="region of interest" description="Interaction with CTNND1">
    <location>
        <begin position="452"/>
        <end position="671"/>
    </location>
</feature>
<feature type="region of interest" description="Required for DNA-binding">
    <location>
        <begin position="512"/>
        <end position="637"/>
    </location>
</feature>
<feature type="short sequence motif" description="Nuclear localization signal" evidence="10">
    <location>
        <begin position="469"/>
        <end position="478"/>
    </location>
</feature>
<feature type="compositionally biased region" description="Polar residues" evidence="5">
    <location>
        <begin position="127"/>
        <end position="144"/>
    </location>
</feature>
<feature type="compositionally biased region" description="Basic and acidic residues" evidence="5">
    <location>
        <begin position="145"/>
        <end position="156"/>
    </location>
</feature>
<feature type="compositionally biased region" description="Polar residues" evidence="5">
    <location>
        <begin position="347"/>
        <end position="365"/>
    </location>
</feature>
<feature type="compositionally biased region" description="Basic and acidic residues" evidence="5">
    <location>
        <begin position="451"/>
        <end position="461"/>
    </location>
</feature>
<feature type="modified residue" description="Phosphothreonine" evidence="2">
    <location>
        <position position="251"/>
    </location>
</feature>
<feature type="cross-link" description="Glycyl lysine isopeptide (Lys-Gly) (interchain with G-Cter in SUMO2)" evidence="2">
    <location>
        <position position="151"/>
    </location>
</feature>
<feature type="cross-link" description="Glycyl lysine isopeptide (Lys-Gly) (interchain with G-Cter in SUMO2)" evidence="2">
    <location>
        <position position="153"/>
    </location>
</feature>
<feature type="cross-link" description="Glycyl lysine isopeptide (Lys-Gly) (interchain with G-Cter in SUMO2)" evidence="2">
    <location>
        <position position="388"/>
    </location>
</feature>
<feature type="cross-link" description="Glycyl lysine isopeptide (Lys-Gly) (interchain with G-Cter in SUMO2)" evidence="2">
    <location>
        <position position="405"/>
    </location>
</feature>
<feature type="cross-link" description="Glycyl lysine isopeptide (Lys-Gly) (interchain with G-Cter in SUMO2)" evidence="2">
    <location>
        <position position="412"/>
    </location>
</feature>
<feature type="cross-link" description="Glycyl lysine isopeptide (Lys-Gly) (interchain with G-Cter in SUMO2)" evidence="2">
    <location>
        <position position="447"/>
    </location>
</feature>
<feature type="cross-link" description="Glycyl lysine isopeptide (Lys-Gly) (interchain with G-Cter in SUMO2)" evidence="2">
    <location>
        <position position="463"/>
    </location>
</feature>
<feature type="cross-link" description="Glycyl lysine isopeptide (Lys-Gly) (interchain with G-Cter in SUMO2)" evidence="2">
    <location>
        <position position="472"/>
    </location>
</feature>
<feature type="cross-link" description="Glycyl lysine isopeptide (Lys-Gly) (interchain with G-Cter in SUMO2)" evidence="2">
    <location>
        <position position="477"/>
    </location>
</feature>
<feature type="cross-link" description="Glycyl lysine isopeptide (Lys-Gly) (interchain with G-Cter in SUMO2)" evidence="2">
    <location>
        <position position="537"/>
    </location>
</feature>
<feature type="cross-link" description="Glycyl lysine isopeptide (Lys-Gly) (interchain with G-Cter in SUMO2)" evidence="2">
    <location>
        <position position="568"/>
    </location>
</feature>
<feature type="cross-link" description="Glycyl lysine isopeptide (Lys-Gly) (interchain with G-Cter in SUMO2)" evidence="2">
    <location>
        <position position="580"/>
    </location>
</feature>
<feature type="cross-link" description="Glycyl lysine isopeptide (Lys-Gly) (interchain with G-Cter in SUMO2)" evidence="2">
    <location>
        <position position="609"/>
    </location>
</feature>
<feature type="cross-link" description="Glycyl lysine isopeptide (Lys-Gly) (interchain with G-Cter in SUMO2)" evidence="2">
    <location>
        <position position="616"/>
    </location>
</feature>
<feature type="mutagenesis site" description="Abrogates nuclear localization." evidence="10">
    <original>K</original>
    <variation>A</variation>
    <location>
        <position position="472"/>
    </location>
</feature>
<feature type="sequence conflict" description="In Ref. 1; AAD20989." evidence="12" ref="1">
    <original>D</original>
    <variation>N</variation>
    <location>
        <position position="441"/>
    </location>
</feature>
<feature type="sequence conflict" description="In Ref. 1; AAD20989." evidence="12" ref="1">
    <original>D</original>
    <variation>H</variation>
    <location>
        <position position="451"/>
    </location>
</feature>
<feature type="sequence conflict" description="In Ref. 1; AAD20989." evidence="12" ref="1">
    <original>E</original>
    <variation>K</variation>
    <location>
        <position position="640"/>
    </location>
</feature>
<proteinExistence type="evidence at protein level"/>